<feature type="chain" id="PRO_0000206853" description="Magnesium-chelatase 60 kDa subunit">
    <location>
        <begin position="1"/>
        <end position="558"/>
    </location>
</feature>
<feature type="domain" description="VWFA" evidence="1">
    <location>
        <begin position="376"/>
        <end position="555"/>
    </location>
</feature>
<feature type="region of interest" description="Disordered" evidence="2">
    <location>
        <begin position="234"/>
        <end position="268"/>
    </location>
</feature>
<feature type="region of interest" description="Disordered" evidence="2">
    <location>
        <begin position="298"/>
        <end position="325"/>
    </location>
</feature>
<feature type="compositionally biased region" description="Acidic residues" evidence="2">
    <location>
        <begin position="240"/>
        <end position="254"/>
    </location>
</feature>
<feature type="compositionally biased region" description="Low complexity" evidence="2">
    <location>
        <begin position="298"/>
        <end position="308"/>
    </location>
</feature>
<dbReference type="EC" id="6.6.1.1"/>
<dbReference type="EMBL" id="AJ010302">
    <property type="protein sequence ID" value="CAB38736.1"/>
    <property type="molecule type" value="Genomic_DNA"/>
</dbReference>
<dbReference type="EMBL" id="AF017642">
    <property type="protein sequence ID" value="AAB97157.1"/>
    <property type="molecule type" value="Genomic_DNA"/>
</dbReference>
<dbReference type="EMBL" id="AF195122">
    <property type="protein sequence ID" value="AAF24286.1"/>
    <property type="molecule type" value="Genomic_DNA"/>
</dbReference>
<dbReference type="EMBL" id="CP000143">
    <property type="protein sequence ID" value="ABA79447.2"/>
    <property type="molecule type" value="Genomic_DNA"/>
</dbReference>
<dbReference type="PIR" id="T50742">
    <property type="entry name" value="T50742"/>
</dbReference>
<dbReference type="RefSeq" id="WP_017140264.1">
    <property type="nucleotide sequence ID" value="NC_007493.2"/>
</dbReference>
<dbReference type="RefSeq" id="YP_353348.2">
    <property type="nucleotide sequence ID" value="NC_007493.2"/>
</dbReference>
<dbReference type="SMR" id="O34845"/>
<dbReference type="STRING" id="272943.RSP_0274"/>
<dbReference type="EnsemblBacteria" id="ABA79447">
    <property type="protein sequence ID" value="ABA79447"/>
    <property type="gene ID" value="RSP_0274"/>
</dbReference>
<dbReference type="GeneID" id="3719283"/>
<dbReference type="KEGG" id="rsp:RSP_0274"/>
<dbReference type="PATRIC" id="fig|272943.9.peg.2217"/>
<dbReference type="eggNOG" id="COG1240">
    <property type="taxonomic scope" value="Bacteria"/>
</dbReference>
<dbReference type="OrthoDB" id="9775079at2"/>
<dbReference type="BioCyc" id="MetaCyc:MONOMER-13262"/>
<dbReference type="UniPathway" id="UPA00669"/>
<dbReference type="Proteomes" id="UP000002703">
    <property type="component" value="Chromosome 1"/>
</dbReference>
<dbReference type="GO" id="GO:0005524">
    <property type="term" value="F:ATP binding"/>
    <property type="evidence" value="ECO:0007669"/>
    <property type="project" value="UniProtKB-KW"/>
</dbReference>
<dbReference type="GO" id="GO:0016851">
    <property type="term" value="F:magnesium chelatase activity"/>
    <property type="evidence" value="ECO:0007669"/>
    <property type="project" value="UniProtKB-EC"/>
</dbReference>
<dbReference type="GO" id="GO:0030494">
    <property type="term" value="P:bacteriochlorophyll biosynthetic process"/>
    <property type="evidence" value="ECO:0007669"/>
    <property type="project" value="UniProtKB-UniPathway"/>
</dbReference>
<dbReference type="GO" id="GO:0015979">
    <property type="term" value="P:photosynthesis"/>
    <property type="evidence" value="ECO:0007669"/>
    <property type="project" value="UniProtKB-KW"/>
</dbReference>
<dbReference type="Gene3D" id="1.10.8.80">
    <property type="entry name" value="Magnesium chelatase subunit I, C-Terminal domain"/>
    <property type="match status" value="1"/>
</dbReference>
<dbReference type="Gene3D" id="3.40.50.410">
    <property type="entry name" value="von Willebrand factor, type A domain"/>
    <property type="match status" value="1"/>
</dbReference>
<dbReference type="InterPro" id="IPR041628">
    <property type="entry name" value="ChlI/MoxR_AAA_lid"/>
</dbReference>
<dbReference type="InterPro" id="IPR011776">
    <property type="entry name" value="Mg_chelatase_ATPase-dsu"/>
</dbReference>
<dbReference type="InterPro" id="IPR027417">
    <property type="entry name" value="P-loop_NTPase"/>
</dbReference>
<dbReference type="InterPro" id="IPR002035">
    <property type="entry name" value="VWF_A"/>
</dbReference>
<dbReference type="InterPro" id="IPR036465">
    <property type="entry name" value="vWFA_dom_sf"/>
</dbReference>
<dbReference type="NCBIfam" id="TIGR02031">
    <property type="entry name" value="BchD-ChlD"/>
    <property type="match status" value="1"/>
</dbReference>
<dbReference type="NCBIfam" id="NF009943">
    <property type="entry name" value="PRK13406.1"/>
    <property type="match status" value="1"/>
</dbReference>
<dbReference type="PANTHER" id="PTHR43473">
    <property type="entry name" value="MAGNESIUM-CHELATASE SUBUNIT CHLD, CHLOROPLASTIC"/>
    <property type="match status" value="1"/>
</dbReference>
<dbReference type="PANTHER" id="PTHR43473:SF2">
    <property type="entry name" value="MAGNESIUM-CHELATASE SUBUNIT CHLD, CHLOROPLASTIC"/>
    <property type="match status" value="1"/>
</dbReference>
<dbReference type="Pfam" id="PF17863">
    <property type="entry name" value="AAA_lid_2"/>
    <property type="match status" value="1"/>
</dbReference>
<dbReference type="Pfam" id="PF13519">
    <property type="entry name" value="VWA_2"/>
    <property type="match status" value="1"/>
</dbReference>
<dbReference type="SMART" id="SM00327">
    <property type="entry name" value="VWA"/>
    <property type="match status" value="1"/>
</dbReference>
<dbReference type="SUPFAM" id="SSF52540">
    <property type="entry name" value="P-loop containing nucleoside triphosphate hydrolases"/>
    <property type="match status" value="1"/>
</dbReference>
<dbReference type="SUPFAM" id="SSF53300">
    <property type="entry name" value="vWA-like"/>
    <property type="match status" value="1"/>
</dbReference>
<dbReference type="PROSITE" id="PS50234">
    <property type="entry name" value="VWFA"/>
    <property type="match status" value="1"/>
</dbReference>
<proteinExistence type="evidence at protein level"/>
<evidence type="ECO:0000255" key="1">
    <source>
        <dbReference type="PROSITE-ProRule" id="PRU00219"/>
    </source>
</evidence>
<evidence type="ECO:0000256" key="2">
    <source>
        <dbReference type="SAM" id="MobiDB-lite"/>
    </source>
</evidence>
<evidence type="ECO:0000305" key="3"/>
<comment type="function">
    <text>Involved in bacteriochlorophyll biosynthesis; introduces a magnesium ion into protoporphyrin IX to yield Mg-protoporphyrin IX.</text>
</comment>
<comment type="catalytic activity">
    <reaction>
        <text>protoporphyrin IX + Mg(2+) + ATP + H2O = Mg-protoporphyrin IX + ADP + phosphate + 3 H(+)</text>
        <dbReference type="Rhea" id="RHEA:13961"/>
        <dbReference type="ChEBI" id="CHEBI:15377"/>
        <dbReference type="ChEBI" id="CHEBI:15378"/>
        <dbReference type="ChEBI" id="CHEBI:18420"/>
        <dbReference type="ChEBI" id="CHEBI:30616"/>
        <dbReference type="ChEBI" id="CHEBI:43474"/>
        <dbReference type="ChEBI" id="CHEBI:57306"/>
        <dbReference type="ChEBI" id="CHEBI:60492"/>
        <dbReference type="ChEBI" id="CHEBI:456216"/>
        <dbReference type="EC" id="6.6.1.1"/>
    </reaction>
</comment>
<comment type="pathway">
    <text>Porphyrin-containing compound metabolism; bacteriochlorophyll biosynthesis.</text>
</comment>
<comment type="similarity">
    <text evidence="3">Belongs to the Mg-chelatase subunits D/I family.</text>
</comment>
<keyword id="KW-0067">ATP-binding</keyword>
<keyword id="KW-0077">Bacteriochlorophyll biosynthesis</keyword>
<keyword id="KW-0149">Chlorophyll biosynthesis</keyword>
<keyword id="KW-0436">Ligase</keyword>
<keyword id="KW-0547">Nucleotide-binding</keyword>
<keyword id="KW-0602">Photosynthesis</keyword>
<keyword id="KW-1185">Reference proteome</keyword>
<protein>
    <recommendedName>
        <fullName>Magnesium-chelatase 60 kDa subunit</fullName>
        <shortName>Mg-chelatase subunit D</shortName>
        <ecNumber>6.6.1.1</ecNumber>
    </recommendedName>
    <alternativeName>
        <fullName>Mg-protoporphyrin IX chelatase</fullName>
    </alternativeName>
</protein>
<accession>O34845</accession>
<accession>Q3J187</accession>
<gene>
    <name type="primary">bchD</name>
    <name type="ordered locus">RHOS4_18790</name>
    <name type="ORF">RSP_0274</name>
</gene>
<organism>
    <name type="scientific">Cereibacter sphaeroides (strain ATCC 17023 / DSM 158 / JCM 6121 / CCUG 31486 / LMG 2827 / NBRC 12203 / NCIMB 8253 / ATH 2.4.1.)</name>
    <name type="common">Rhodobacter sphaeroides</name>
    <dbReference type="NCBI Taxonomy" id="272943"/>
    <lineage>
        <taxon>Bacteria</taxon>
        <taxon>Pseudomonadati</taxon>
        <taxon>Pseudomonadota</taxon>
        <taxon>Alphaproteobacteria</taxon>
        <taxon>Rhodobacterales</taxon>
        <taxon>Paracoccaceae</taxon>
        <taxon>Cereibacter</taxon>
    </lineage>
</organism>
<reference key="1">
    <citation type="online journal article" date="1997" name="Plant Gene Register">
        <title>Rhodobacter sphaeroides bchI and bchD encoding two subunits of magnesium chelatase.</title>
        <authorList>
            <person name="Hansson M."/>
            <person name="Kannangara C.G."/>
        </authorList>
        <locator>PGR97-190</locator>
    </citation>
    <scope>NUCLEOTIDE SEQUENCE [GENOMIC DNA]</scope>
</reference>
<reference key="2">
    <citation type="journal article" date="2000" name="Nucleic Acids Res.">
        <title>DNA sequence analysis of the photosynthesis region of Rhodobacter sphaeroides 2.4.1.</title>
        <authorList>
            <person name="Choudhary M."/>
            <person name="Kaplan S."/>
        </authorList>
    </citation>
    <scope>NUCLEOTIDE SEQUENCE [GENOMIC DNA]</scope>
</reference>
<reference key="3">
    <citation type="submission" date="2005-09" db="EMBL/GenBank/DDBJ databases">
        <title>Complete sequence of chromosome 1 of Rhodobacter sphaeroides 2.4.1.</title>
        <authorList>
            <person name="Copeland A."/>
            <person name="Lucas S."/>
            <person name="Lapidus A."/>
            <person name="Barry K."/>
            <person name="Detter J.C."/>
            <person name="Glavina T."/>
            <person name="Hammon N."/>
            <person name="Israni S."/>
            <person name="Pitluck S."/>
            <person name="Richardson P."/>
            <person name="Mackenzie C."/>
            <person name="Choudhary M."/>
            <person name="Larimer F."/>
            <person name="Hauser L.J."/>
            <person name="Land M."/>
            <person name="Donohue T.J."/>
            <person name="Kaplan S."/>
        </authorList>
    </citation>
    <scope>NUCLEOTIDE SEQUENCE [LARGE SCALE GENOMIC DNA]</scope>
    <source>
        <strain>ATCC 17023 / DSM 158 / JCM 6121 / CCUG 31486 / LMG 2827 / NBRC 12203 / NCIMB 8253 / ATH 2.4.1.</strain>
    </source>
</reference>
<reference key="4">
    <citation type="journal article" date="1995" name="Proc. Natl. Acad. Sci. U.S.A.">
        <title>Magnesium-protoporphyrin chelatase of Rhodobacter sphaeroides: reconstitution of activity by combining the products of the bchH, -I, and -D genes expressed in Escherichia coli.</title>
        <authorList>
            <person name="Gibson L.C.D."/>
            <person name="Willows R.D."/>
            <person name="Kannangara C.G."/>
            <person name="von Wettstein D."/>
            <person name="Hunter C.N."/>
        </authorList>
    </citation>
    <scope>CHARACTERIZATION</scope>
</reference>
<sequence length="558" mass="58548">MPLGPWERVEAALTLLAIDPAGLKGLWLRARASALRDRITGALGALPLPVRRIHPTIGDDALFGGLDLAATLSAGTPVVQKGILDEPAVLVLAMAERTLPGLAARLGTALDAPRHCLIALDEGAERDELLPLGLVDRLALFLDLDGLPWGETREIALDPERLAAARARLAAVATPPEAAATLARVAAQLGIASLRAPTLALAAARAQAAWEGHAAVTDEDIRRAADLVFAHRAMPASEEAPPEPEPEPPEDQPDDSPPPPEQQQGEEMFPEEMLVEAVRAALPADLLEQLAAGRAARMARGATGTGSAKAGNRRGRPLPSRMGRLGTGARIDLVGTLRAAAPWQPLRRRQQKTDAVLLVRPSDIRIKRFRETSDRVLIFAVDASGSSAMARLSEAKGAVELLLGQAYARRDHVSLLAFRGRDAELILPPTRSLVQTKRRLAGLPGGGGTPLAHGLRLALAVGLQARARGMTPTVALLTDGRGNIALDGSANRAQAEEDALKLAASLRGSGLPAVVIDTANRPQPSLAALARALDAPYIALPRADAHKLSNVLGAAMGD</sequence>
<name>BCHD_CERS4</name>